<proteinExistence type="evidence at protein level"/>
<accession>Q32L72</accession>
<name>SMIP3_BOVIN</name>
<gene>
    <name type="primary">SPMIP3</name>
</gene>
<dbReference type="EMBL" id="BC109731">
    <property type="protein sequence ID" value="AAI09732.1"/>
    <property type="molecule type" value="mRNA"/>
</dbReference>
<dbReference type="RefSeq" id="NP_001070522.1">
    <property type="nucleotide sequence ID" value="NM_001077054.1"/>
</dbReference>
<dbReference type="PDB" id="8OTZ">
    <property type="method" value="EM"/>
    <property type="resolution" value="3.60 A"/>
    <property type="chains" value="D=1-138"/>
</dbReference>
<dbReference type="PDBsum" id="8OTZ"/>
<dbReference type="EMDB" id="EMD-17187"/>
<dbReference type="EMDB" id="EMD-50664"/>
<dbReference type="SMR" id="Q32L72"/>
<dbReference type="STRING" id="9913.ENSBTAP00000067133"/>
<dbReference type="PaxDb" id="9913-ENSBTAP00000044294"/>
<dbReference type="Ensembl" id="ENSBTAT00000047059.2">
    <property type="protein sequence ID" value="ENSBTAP00000044294.1"/>
    <property type="gene ID" value="ENSBTAG00000033127.3"/>
</dbReference>
<dbReference type="GeneID" id="767994"/>
<dbReference type="KEGG" id="bta:767994"/>
<dbReference type="CTD" id="767994"/>
<dbReference type="VEuPathDB" id="HostDB:ENSBTAG00000033127"/>
<dbReference type="VGNC" id="VGNC:52638">
    <property type="gene designation" value="SPMIP3"/>
</dbReference>
<dbReference type="eggNOG" id="ENOG502STJK">
    <property type="taxonomic scope" value="Eukaryota"/>
</dbReference>
<dbReference type="GeneTree" id="ENSGT00390000017364"/>
<dbReference type="HOGENOM" id="CLU_149432_0_0_1"/>
<dbReference type="InParanoid" id="Q32L72"/>
<dbReference type="OMA" id="HIWLREF"/>
<dbReference type="OrthoDB" id="10034627at2759"/>
<dbReference type="TreeFam" id="TF337910"/>
<dbReference type="Proteomes" id="UP000009136">
    <property type="component" value="Chromosome 16"/>
</dbReference>
<dbReference type="Bgee" id="ENSBTAG00000033127">
    <property type="expression patterns" value="Expressed in semen and 28 other cell types or tissues"/>
</dbReference>
<dbReference type="InterPro" id="IPR037668">
    <property type="entry name" value="SPMIP3"/>
</dbReference>
<dbReference type="PANTHER" id="PTHR31763:SF2">
    <property type="entry name" value="CHROMOSOME 1 OPEN READING FRAME 100"/>
    <property type="match status" value="1"/>
</dbReference>
<dbReference type="PANTHER" id="PTHR31763">
    <property type="entry name" value="HYPOTHETICAL PROTEIN LOC689766"/>
    <property type="match status" value="1"/>
</dbReference>
<dbReference type="Pfam" id="PF17670">
    <property type="entry name" value="DUF5530"/>
    <property type="match status" value="1"/>
</dbReference>
<organism>
    <name type="scientific">Bos taurus</name>
    <name type="common">Bovine</name>
    <dbReference type="NCBI Taxonomy" id="9913"/>
    <lineage>
        <taxon>Eukaryota</taxon>
        <taxon>Metazoa</taxon>
        <taxon>Chordata</taxon>
        <taxon>Craniata</taxon>
        <taxon>Vertebrata</taxon>
        <taxon>Euteleostomi</taxon>
        <taxon>Mammalia</taxon>
        <taxon>Eutheria</taxon>
        <taxon>Laurasiatheria</taxon>
        <taxon>Artiodactyla</taxon>
        <taxon>Ruminantia</taxon>
        <taxon>Pecora</taxon>
        <taxon>Bovidae</taxon>
        <taxon>Bovinae</taxon>
        <taxon>Bos</taxon>
    </lineage>
</organism>
<reference key="1">
    <citation type="submission" date="2005-11" db="EMBL/GenBank/DDBJ databases">
        <authorList>
            <consortium name="NIH - Mammalian Gene Collection (MGC) project"/>
        </authorList>
    </citation>
    <scope>NUCLEOTIDE SEQUENCE [LARGE SCALE MRNA]</scope>
    <source>
        <strain>Crossbred X Angus</strain>
        <tissue>Liver</tissue>
    </source>
</reference>
<feature type="chain" id="PRO_0000274314" description="Protein SPMIP3">
    <location>
        <begin position="1"/>
        <end position="138"/>
    </location>
</feature>
<sequence length="138" mass="16615">MTAIRLREFIDRRPAIPPSIFIVHQGKDLRGYYTGQLARVHYDYSVKRSPRPLIDLDIPFKKKSQYQPQLDQQTLIQYICFRRRSKPAEPWYKETSYQRDYSLPFYKTDWDRKLATVSSNPRPLNSLPEHYCCEGRWL</sequence>
<protein>
    <recommendedName>
        <fullName>Protein SPMIP3</fullName>
    </recommendedName>
    <alternativeName>
        <fullName>Sperm-associated microtubule inner protein 3</fullName>
    </alternativeName>
</protein>
<keyword id="KW-0002">3D-structure</keyword>
<keyword id="KW-1185">Reference proteome</keyword>